<sequence>MKNTIINLAQDLIRRPSISPDDQGCQQVIAERLTKLGFNIEWMSFNDTINLWAKHGTTSPVVAFAGHTDVVPTGDENQWNYPPFSAQIVDDMLYGRGAADMKGSLAAMIVAAEEYVKANPNHAGTIALLITSDEEAAAKDGTVKVVESLMARGENIDYCLVGEPSSAKQLGDVVKNGRRGSITGDLYIQGIQGHVAYPHLAENPVHKATKFLTELTTYEWDNGNEFFPPTSLQIANIHAGTGSNNVIPGELYVQFNLRYCTEVTDEFIKNKVAEMLQKHDLTYRIDWNLSGKPFLTKPGKLLNAVVESLESVAGIKPKLDTGGGTSDGRFIALMGAEVVELGPLNATIHKVNECVSCRDLATLGEVYRQMLVNLLGK</sequence>
<evidence type="ECO:0000255" key="1">
    <source>
        <dbReference type="HAMAP-Rule" id="MF_01690"/>
    </source>
</evidence>
<protein>
    <recommendedName>
        <fullName evidence="1">Succinyl-diaminopimelate desuccinylase</fullName>
        <shortName evidence="1">SDAP desuccinylase</shortName>
        <ecNumber evidence="1">3.5.1.18</ecNumber>
    </recommendedName>
    <alternativeName>
        <fullName evidence="1">N-succinyl-LL-2,6-diaminoheptanedioate amidohydrolase</fullName>
    </alternativeName>
</protein>
<feature type="chain" id="PRO_0000375605" description="Succinyl-diaminopimelate desuccinylase">
    <location>
        <begin position="1"/>
        <end position="377"/>
    </location>
</feature>
<feature type="active site" evidence="1">
    <location>
        <position position="69"/>
    </location>
</feature>
<feature type="active site" description="Proton acceptor" evidence="1">
    <location>
        <position position="134"/>
    </location>
</feature>
<feature type="binding site" evidence="1">
    <location>
        <position position="67"/>
    </location>
    <ligand>
        <name>Zn(2+)</name>
        <dbReference type="ChEBI" id="CHEBI:29105"/>
        <label>1</label>
    </ligand>
</feature>
<feature type="binding site" evidence="1">
    <location>
        <position position="100"/>
    </location>
    <ligand>
        <name>Zn(2+)</name>
        <dbReference type="ChEBI" id="CHEBI:29105"/>
        <label>1</label>
    </ligand>
</feature>
<feature type="binding site" evidence="1">
    <location>
        <position position="100"/>
    </location>
    <ligand>
        <name>Zn(2+)</name>
        <dbReference type="ChEBI" id="CHEBI:29105"/>
        <label>2</label>
    </ligand>
</feature>
<feature type="binding site" evidence="1">
    <location>
        <position position="135"/>
    </location>
    <ligand>
        <name>Zn(2+)</name>
        <dbReference type="ChEBI" id="CHEBI:29105"/>
        <label>2</label>
    </ligand>
</feature>
<feature type="binding site" evidence="1">
    <location>
        <position position="163"/>
    </location>
    <ligand>
        <name>Zn(2+)</name>
        <dbReference type="ChEBI" id="CHEBI:29105"/>
        <label>1</label>
    </ligand>
</feature>
<feature type="binding site" evidence="1">
    <location>
        <position position="349"/>
    </location>
    <ligand>
        <name>Zn(2+)</name>
        <dbReference type="ChEBI" id="CHEBI:29105"/>
        <label>2</label>
    </ligand>
</feature>
<comment type="function">
    <text evidence="1">Catalyzes the hydrolysis of N-succinyl-L,L-diaminopimelic acid (SDAP), forming succinate and LL-2,6-diaminopimelate (DAP), an intermediate involved in the bacterial biosynthesis of lysine and meso-diaminopimelic acid, an essential component of bacterial cell walls.</text>
</comment>
<comment type="catalytic activity">
    <reaction evidence="1">
        <text>N-succinyl-(2S,6S)-2,6-diaminopimelate + H2O = (2S,6S)-2,6-diaminopimelate + succinate</text>
        <dbReference type="Rhea" id="RHEA:22608"/>
        <dbReference type="ChEBI" id="CHEBI:15377"/>
        <dbReference type="ChEBI" id="CHEBI:30031"/>
        <dbReference type="ChEBI" id="CHEBI:57609"/>
        <dbReference type="ChEBI" id="CHEBI:58087"/>
        <dbReference type="EC" id="3.5.1.18"/>
    </reaction>
</comment>
<comment type="cofactor">
    <cofactor evidence="1">
        <name>Zn(2+)</name>
        <dbReference type="ChEBI" id="CHEBI:29105"/>
    </cofactor>
    <cofactor evidence="1">
        <name>Co(2+)</name>
        <dbReference type="ChEBI" id="CHEBI:48828"/>
    </cofactor>
    <text evidence="1">Binds 2 Zn(2+) or Co(2+) ions per subunit.</text>
</comment>
<comment type="pathway">
    <text evidence="1">Amino-acid biosynthesis; L-lysine biosynthesis via DAP pathway; LL-2,6-diaminopimelate from (S)-tetrahydrodipicolinate (succinylase route): step 3/3.</text>
</comment>
<comment type="subunit">
    <text evidence="1">Homodimer.</text>
</comment>
<comment type="similarity">
    <text evidence="1">Belongs to the peptidase M20A family. DapE subfamily.</text>
</comment>
<organism>
    <name type="scientific">Mannheimia succiniciproducens (strain KCTC 0769BP / MBEL55E)</name>
    <dbReference type="NCBI Taxonomy" id="221988"/>
    <lineage>
        <taxon>Bacteria</taxon>
        <taxon>Pseudomonadati</taxon>
        <taxon>Pseudomonadota</taxon>
        <taxon>Gammaproteobacteria</taxon>
        <taxon>Pasteurellales</taxon>
        <taxon>Pasteurellaceae</taxon>
        <taxon>Basfia</taxon>
    </lineage>
</organism>
<accession>Q65US9</accession>
<gene>
    <name evidence="1" type="primary">dapE</name>
    <name type="ordered locus">MS0674</name>
</gene>
<proteinExistence type="inferred from homology"/>
<name>DAPE_MANSM</name>
<reference key="1">
    <citation type="journal article" date="2004" name="Nat. Biotechnol.">
        <title>The genome sequence of the capnophilic rumen bacterium Mannheimia succiniciproducens.</title>
        <authorList>
            <person name="Hong S.H."/>
            <person name="Kim J.S."/>
            <person name="Lee S.Y."/>
            <person name="In Y.H."/>
            <person name="Choi S.S."/>
            <person name="Rih J.-K."/>
            <person name="Kim C.H."/>
            <person name="Jeong H."/>
            <person name="Hur C.G."/>
            <person name="Kim J.J."/>
        </authorList>
    </citation>
    <scope>NUCLEOTIDE SEQUENCE [LARGE SCALE GENOMIC DNA]</scope>
    <source>
        <strain>KCTC 0769BP / MBEL55E</strain>
    </source>
</reference>
<dbReference type="EC" id="3.5.1.18" evidence="1"/>
<dbReference type="EMBL" id="AE016827">
    <property type="protein sequence ID" value="AAU37281.1"/>
    <property type="molecule type" value="Genomic_DNA"/>
</dbReference>
<dbReference type="RefSeq" id="WP_011199853.1">
    <property type="nucleotide sequence ID" value="NC_006300.1"/>
</dbReference>
<dbReference type="SMR" id="Q65US9"/>
<dbReference type="STRING" id="221988.MS0674"/>
<dbReference type="KEGG" id="msu:MS0674"/>
<dbReference type="eggNOG" id="COG0624">
    <property type="taxonomic scope" value="Bacteria"/>
</dbReference>
<dbReference type="HOGENOM" id="CLU_021802_4_0_6"/>
<dbReference type="OrthoDB" id="9809784at2"/>
<dbReference type="UniPathway" id="UPA00034">
    <property type="reaction ID" value="UER00021"/>
</dbReference>
<dbReference type="Proteomes" id="UP000000607">
    <property type="component" value="Chromosome"/>
</dbReference>
<dbReference type="GO" id="GO:0008777">
    <property type="term" value="F:acetylornithine deacetylase activity"/>
    <property type="evidence" value="ECO:0007669"/>
    <property type="project" value="TreeGrafter"/>
</dbReference>
<dbReference type="GO" id="GO:0050897">
    <property type="term" value="F:cobalt ion binding"/>
    <property type="evidence" value="ECO:0007669"/>
    <property type="project" value="UniProtKB-UniRule"/>
</dbReference>
<dbReference type="GO" id="GO:0009014">
    <property type="term" value="F:succinyl-diaminopimelate desuccinylase activity"/>
    <property type="evidence" value="ECO:0007669"/>
    <property type="project" value="UniProtKB-UniRule"/>
</dbReference>
<dbReference type="GO" id="GO:0008270">
    <property type="term" value="F:zinc ion binding"/>
    <property type="evidence" value="ECO:0007669"/>
    <property type="project" value="UniProtKB-UniRule"/>
</dbReference>
<dbReference type="GO" id="GO:0019877">
    <property type="term" value="P:diaminopimelate biosynthetic process"/>
    <property type="evidence" value="ECO:0007669"/>
    <property type="project" value="UniProtKB-UniRule"/>
</dbReference>
<dbReference type="GO" id="GO:0006526">
    <property type="term" value="P:L-arginine biosynthetic process"/>
    <property type="evidence" value="ECO:0007669"/>
    <property type="project" value="TreeGrafter"/>
</dbReference>
<dbReference type="GO" id="GO:0009089">
    <property type="term" value="P:lysine biosynthetic process via diaminopimelate"/>
    <property type="evidence" value="ECO:0007669"/>
    <property type="project" value="UniProtKB-UniRule"/>
</dbReference>
<dbReference type="CDD" id="cd03891">
    <property type="entry name" value="M20_DapE_proteobac"/>
    <property type="match status" value="1"/>
</dbReference>
<dbReference type="FunFam" id="3.30.70.360:FF:000011">
    <property type="entry name" value="Succinyl-diaminopimelate desuccinylase"/>
    <property type="match status" value="1"/>
</dbReference>
<dbReference type="FunFam" id="3.40.630.10:FF:000005">
    <property type="entry name" value="Succinyl-diaminopimelate desuccinylase"/>
    <property type="match status" value="1"/>
</dbReference>
<dbReference type="Gene3D" id="3.30.70.360">
    <property type="match status" value="1"/>
</dbReference>
<dbReference type="Gene3D" id="3.40.630.10">
    <property type="entry name" value="Zn peptidases"/>
    <property type="match status" value="1"/>
</dbReference>
<dbReference type="HAMAP" id="MF_01690">
    <property type="entry name" value="DapE"/>
    <property type="match status" value="1"/>
</dbReference>
<dbReference type="InterPro" id="IPR001261">
    <property type="entry name" value="ArgE/DapE_CS"/>
</dbReference>
<dbReference type="InterPro" id="IPR036264">
    <property type="entry name" value="Bact_exopeptidase_dim_dom"/>
</dbReference>
<dbReference type="InterPro" id="IPR005941">
    <property type="entry name" value="DapE_proteobac"/>
</dbReference>
<dbReference type="InterPro" id="IPR002933">
    <property type="entry name" value="Peptidase_M20"/>
</dbReference>
<dbReference type="InterPro" id="IPR011650">
    <property type="entry name" value="Peptidase_M20_dimer"/>
</dbReference>
<dbReference type="InterPro" id="IPR050072">
    <property type="entry name" value="Peptidase_M20A"/>
</dbReference>
<dbReference type="NCBIfam" id="TIGR01246">
    <property type="entry name" value="dapE_proteo"/>
    <property type="match status" value="1"/>
</dbReference>
<dbReference type="NCBIfam" id="NF009557">
    <property type="entry name" value="PRK13009.1"/>
    <property type="match status" value="1"/>
</dbReference>
<dbReference type="PANTHER" id="PTHR43808">
    <property type="entry name" value="ACETYLORNITHINE DEACETYLASE"/>
    <property type="match status" value="1"/>
</dbReference>
<dbReference type="PANTHER" id="PTHR43808:SF31">
    <property type="entry name" value="N-ACETYL-L-CITRULLINE DEACETYLASE"/>
    <property type="match status" value="1"/>
</dbReference>
<dbReference type="Pfam" id="PF07687">
    <property type="entry name" value="M20_dimer"/>
    <property type="match status" value="1"/>
</dbReference>
<dbReference type="Pfam" id="PF01546">
    <property type="entry name" value="Peptidase_M20"/>
    <property type="match status" value="1"/>
</dbReference>
<dbReference type="SUPFAM" id="SSF55031">
    <property type="entry name" value="Bacterial exopeptidase dimerisation domain"/>
    <property type="match status" value="1"/>
</dbReference>
<dbReference type="SUPFAM" id="SSF53187">
    <property type="entry name" value="Zn-dependent exopeptidases"/>
    <property type="match status" value="1"/>
</dbReference>
<dbReference type="PROSITE" id="PS00758">
    <property type="entry name" value="ARGE_DAPE_CPG2_1"/>
    <property type="match status" value="1"/>
</dbReference>
<keyword id="KW-0028">Amino-acid biosynthesis</keyword>
<keyword id="KW-0170">Cobalt</keyword>
<keyword id="KW-0220">Diaminopimelate biosynthesis</keyword>
<keyword id="KW-0378">Hydrolase</keyword>
<keyword id="KW-0457">Lysine biosynthesis</keyword>
<keyword id="KW-0479">Metal-binding</keyword>
<keyword id="KW-0862">Zinc</keyword>